<name>RECO_STRPZ</name>
<keyword id="KW-0227">DNA damage</keyword>
<keyword id="KW-0233">DNA recombination</keyword>
<keyword id="KW-0234">DNA repair</keyword>
<dbReference type="EMBL" id="CP000829">
    <property type="protein sequence ID" value="ACI60380.1"/>
    <property type="molecule type" value="Genomic_DNA"/>
</dbReference>
<dbReference type="SMR" id="B5XJ12"/>
<dbReference type="KEGG" id="soz:Spy49_0017"/>
<dbReference type="HOGENOM" id="CLU_066632_4_0_9"/>
<dbReference type="Proteomes" id="UP000001039">
    <property type="component" value="Chromosome"/>
</dbReference>
<dbReference type="GO" id="GO:0043590">
    <property type="term" value="C:bacterial nucleoid"/>
    <property type="evidence" value="ECO:0007669"/>
    <property type="project" value="TreeGrafter"/>
</dbReference>
<dbReference type="GO" id="GO:0006310">
    <property type="term" value="P:DNA recombination"/>
    <property type="evidence" value="ECO:0007669"/>
    <property type="project" value="UniProtKB-UniRule"/>
</dbReference>
<dbReference type="GO" id="GO:0006302">
    <property type="term" value="P:double-strand break repair"/>
    <property type="evidence" value="ECO:0007669"/>
    <property type="project" value="TreeGrafter"/>
</dbReference>
<dbReference type="Gene3D" id="2.40.50.140">
    <property type="entry name" value="Nucleic acid-binding proteins"/>
    <property type="match status" value="1"/>
</dbReference>
<dbReference type="Gene3D" id="1.20.1440.120">
    <property type="entry name" value="Recombination protein O, C-terminal domain"/>
    <property type="match status" value="1"/>
</dbReference>
<dbReference type="HAMAP" id="MF_00201">
    <property type="entry name" value="RecO"/>
    <property type="match status" value="1"/>
</dbReference>
<dbReference type="InterPro" id="IPR037278">
    <property type="entry name" value="ARFGAP/RecO"/>
</dbReference>
<dbReference type="InterPro" id="IPR022572">
    <property type="entry name" value="DNA_rep/recomb_RecO_N"/>
</dbReference>
<dbReference type="InterPro" id="IPR012340">
    <property type="entry name" value="NA-bd_OB-fold"/>
</dbReference>
<dbReference type="InterPro" id="IPR003717">
    <property type="entry name" value="RecO"/>
</dbReference>
<dbReference type="InterPro" id="IPR042242">
    <property type="entry name" value="RecO_C"/>
</dbReference>
<dbReference type="NCBIfam" id="TIGR00613">
    <property type="entry name" value="reco"/>
    <property type="match status" value="1"/>
</dbReference>
<dbReference type="PANTHER" id="PTHR33991">
    <property type="entry name" value="DNA REPAIR PROTEIN RECO"/>
    <property type="match status" value="1"/>
</dbReference>
<dbReference type="PANTHER" id="PTHR33991:SF1">
    <property type="entry name" value="DNA REPAIR PROTEIN RECO"/>
    <property type="match status" value="1"/>
</dbReference>
<dbReference type="Pfam" id="PF02565">
    <property type="entry name" value="RecO_C"/>
    <property type="match status" value="1"/>
</dbReference>
<dbReference type="Pfam" id="PF11967">
    <property type="entry name" value="RecO_N"/>
    <property type="match status" value="1"/>
</dbReference>
<dbReference type="SUPFAM" id="SSF57863">
    <property type="entry name" value="ArfGap/RecO-like zinc finger"/>
    <property type="match status" value="1"/>
</dbReference>
<dbReference type="SUPFAM" id="SSF50249">
    <property type="entry name" value="Nucleic acid-binding proteins"/>
    <property type="match status" value="1"/>
</dbReference>
<evidence type="ECO:0000255" key="1">
    <source>
        <dbReference type="HAMAP-Rule" id="MF_00201"/>
    </source>
</evidence>
<feature type="chain" id="PRO_1000099420" description="DNA repair protein RecO">
    <location>
        <begin position="1"/>
        <end position="251"/>
    </location>
</feature>
<reference key="1">
    <citation type="journal article" date="2008" name="J. Bacteriol.">
        <title>Genome sequence of a nephritogenic and highly transformable M49 strain of Streptococcus pyogenes.</title>
        <authorList>
            <person name="McShan W.M."/>
            <person name="Ferretti J.J."/>
            <person name="Karasawa T."/>
            <person name="Suvorov A.N."/>
            <person name="Lin S."/>
            <person name="Qin B."/>
            <person name="Jia H."/>
            <person name="Kenton S."/>
            <person name="Najar F."/>
            <person name="Wu H."/>
            <person name="Scott J."/>
            <person name="Roe B.A."/>
            <person name="Savic D.J."/>
        </authorList>
    </citation>
    <scope>NUCLEOTIDE SEQUENCE [LARGE SCALE GENOMIC DNA]</scope>
    <source>
        <strain>NZ131</strain>
    </source>
</reference>
<proteinExistence type="inferred from homology"/>
<organism>
    <name type="scientific">Streptococcus pyogenes serotype M49 (strain NZ131)</name>
    <dbReference type="NCBI Taxonomy" id="471876"/>
    <lineage>
        <taxon>Bacteria</taxon>
        <taxon>Bacillati</taxon>
        <taxon>Bacillota</taxon>
        <taxon>Bacilli</taxon>
        <taxon>Lactobacillales</taxon>
        <taxon>Streptococcaceae</taxon>
        <taxon>Streptococcus</taxon>
    </lineage>
</organism>
<protein>
    <recommendedName>
        <fullName evidence="1">DNA repair protein RecO</fullName>
    </recommendedName>
    <alternativeName>
        <fullName evidence="1">Recombination protein O</fullName>
    </alternativeName>
</protein>
<comment type="function">
    <text evidence="1">Involved in DNA repair and RecF pathway recombination.</text>
</comment>
<comment type="similarity">
    <text evidence="1">Belongs to the RecO family.</text>
</comment>
<gene>
    <name evidence="1" type="primary">recO</name>
    <name type="ordered locus">Spy49_0017</name>
</gene>
<accession>B5XJ12</accession>
<sequence>MQLTESLGIVLFNRNYREDDKLVKIFTEVAGKQMFFVKHISRSKMSSIIQPLTIADFIFKLNDTGLSYVVDYSNVNTYRYINNDIFRLAYASYVLALADAAIADNESDSHLFTFLKKTLDLMEEGLDYEILTNIFEIQILDRFGISLNFHECAICHRTDLPLDFSHRFSAVLCSEHYYKDNRRNHLDPNVIYLLSRFQKITFDDLRTISLNKDIKKKLRQFIDELYHDYVGIKLKSKTFIDNLVKWGDIMK</sequence>